<comment type="function">
    <text evidence="1">Peptidoglycan polymerase that catalyzes glycan chain elongation from lipid-linked precursors.</text>
</comment>
<comment type="catalytic activity">
    <reaction evidence="1">
        <text>[GlcNAc-(1-&gt;4)-Mur2Ac(oyl-L-Ala-gamma-D-Glu-L-Lys-D-Ala-D-Ala)](n)-di-trans,octa-cis-undecaprenyl diphosphate + beta-D-GlcNAc-(1-&gt;4)-Mur2Ac(oyl-L-Ala-gamma-D-Glu-L-Lys-D-Ala-D-Ala)-di-trans,octa-cis-undecaprenyl diphosphate = [GlcNAc-(1-&gt;4)-Mur2Ac(oyl-L-Ala-gamma-D-Glu-L-Lys-D-Ala-D-Ala)](n+1)-di-trans,octa-cis-undecaprenyl diphosphate + di-trans,octa-cis-undecaprenyl diphosphate + H(+)</text>
        <dbReference type="Rhea" id="RHEA:23708"/>
        <dbReference type="Rhea" id="RHEA-COMP:9602"/>
        <dbReference type="Rhea" id="RHEA-COMP:9603"/>
        <dbReference type="ChEBI" id="CHEBI:15378"/>
        <dbReference type="ChEBI" id="CHEBI:58405"/>
        <dbReference type="ChEBI" id="CHEBI:60033"/>
        <dbReference type="ChEBI" id="CHEBI:78435"/>
        <dbReference type="EC" id="2.4.99.28"/>
    </reaction>
</comment>
<comment type="pathway">
    <text evidence="1">Cell wall biogenesis; peptidoglycan biosynthesis.</text>
</comment>
<comment type="subcellular location">
    <subcellularLocation>
        <location evidence="1">Cell inner membrane</location>
        <topology evidence="1">Single-pass membrane protein</topology>
    </subcellularLocation>
</comment>
<comment type="similarity">
    <text evidence="1">Belongs to the glycosyltransferase 51 family.</text>
</comment>
<keyword id="KW-0997">Cell inner membrane</keyword>
<keyword id="KW-1003">Cell membrane</keyword>
<keyword id="KW-0133">Cell shape</keyword>
<keyword id="KW-0961">Cell wall biogenesis/degradation</keyword>
<keyword id="KW-0328">Glycosyltransferase</keyword>
<keyword id="KW-0472">Membrane</keyword>
<keyword id="KW-0573">Peptidoglycan synthesis</keyword>
<keyword id="KW-0808">Transferase</keyword>
<keyword id="KW-0812">Transmembrane</keyword>
<keyword id="KW-1133">Transmembrane helix</keyword>
<name>MTGA_ACIB3</name>
<organism>
    <name type="scientific">Acinetobacter baumannii (strain AB307-0294)</name>
    <dbReference type="NCBI Taxonomy" id="557600"/>
    <lineage>
        <taxon>Bacteria</taxon>
        <taxon>Pseudomonadati</taxon>
        <taxon>Pseudomonadota</taxon>
        <taxon>Gammaproteobacteria</taxon>
        <taxon>Moraxellales</taxon>
        <taxon>Moraxellaceae</taxon>
        <taxon>Acinetobacter</taxon>
        <taxon>Acinetobacter calcoaceticus/baumannii complex</taxon>
    </lineage>
</organism>
<accession>B7GXW9</accession>
<sequence>MKAFIVRVLLIFIGAILLIQLWIFSSLVWWRTHEVDTTMFMRIDYWSDPSEPIIHEWLDYDDISDNFKHAILAGEDAKFIHHHGFDWDGIRFALERNNEEGEVVAGGSTVSQQLAKNLFLYNKRSFIRKGQETVATWMMERMWSKRRILEVYMNSVEFGKNLYGVEAAAQYYYGKSAKSLTREQAAFLAALLPDPKYYQDHRNDRKLQYRKRVILRYMNSTQIPE</sequence>
<proteinExistence type="inferred from homology"/>
<evidence type="ECO:0000255" key="1">
    <source>
        <dbReference type="HAMAP-Rule" id="MF_00766"/>
    </source>
</evidence>
<reference key="1">
    <citation type="journal article" date="2008" name="J. Bacteriol.">
        <title>Comparative genome sequence analysis of multidrug-resistant Acinetobacter baumannii.</title>
        <authorList>
            <person name="Adams M.D."/>
            <person name="Goglin K."/>
            <person name="Molyneaux N."/>
            <person name="Hujer K.M."/>
            <person name="Lavender H."/>
            <person name="Jamison J.J."/>
            <person name="MacDonald I.J."/>
            <person name="Martin K.M."/>
            <person name="Russo T."/>
            <person name="Campagnari A.A."/>
            <person name="Hujer A.M."/>
            <person name="Bonomo R.A."/>
            <person name="Gill S.R."/>
        </authorList>
    </citation>
    <scope>NUCLEOTIDE SEQUENCE [LARGE SCALE GENOMIC DNA]</scope>
    <source>
        <strain>AB307-0294</strain>
    </source>
</reference>
<feature type="chain" id="PRO_1000133579" description="Biosynthetic peptidoglycan transglycosylase">
    <location>
        <begin position="1"/>
        <end position="225"/>
    </location>
</feature>
<feature type="transmembrane region" description="Helical" evidence="1">
    <location>
        <begin position="8"/>
        <end position="28"/>
    </location>
</feature>
<gene>
    <name evidence="1" type="primary">mtgA</name>
    <name type="ordered locus">ABBFA_002621</name>
</gene>
<dbReference type="EC" id="2.4.99.28" evidence="1"/>
<dbReference type="EMBL" id="CP001172">
    <property type="protein sequence ID" value="ACJ57426.1"/>
    <property type="molecule type" value="Genomic_DNA"/>
</dbReference>
<dbReference type="RefSeq" id="WP_000642930.1">
    <property type="nucleotide sequence ID" value="NZ_CP001172.1"/>
</dbReference>
<dbReference type="SMR" id="B7GXW9"/>
<dbReference type="CAZy" id="GT51">
    <property type="family name" value="Glycosyltransferase Family 51"/>
</dbReference>
<dbReference type="HOGENOM" id="CLU_006354_1_1_6"/>
<dbReference type="UniPathway" id="UPA00219"/>
<dbReference type="Proteomes" id="UP000006924">
    <property type="component" value="Chromosome"/>
</dbReference>
<dbReference type="GO" id="GO:0009274">
    <property type="term" value="C:peptidoglycan-based cell wall"/>
    <property type="evidence" value="ECO:0007669"/>
    <property type="project" value="InterPro"/>
</dbReference>
<dbReference type="GO" id="GO:0005886">
    <property type="term" value="C:plasma membrane"/>
    <property type="evidence" value="ECO:0007669"/>
    <property type="project" value="UniProtKB-SubCell"/>
</dbReference>
<dbReference type="GO" id="GO:0016763">
    <property type="term" value="F:pentosyltransferase activity"/>
    <property type="evidence" value="ECO:0007669"/>
    <property type="project" value="InterPro"/>
</dbReference>
<dbReference type="GO" id="GO:0008955">
    <property type="term" value="F:peptidoglycan glycosyltransferase activity"/>
    <property type="evidence" value="ECO:0007669"/>
    <property type="project" value="UniProtKB-UniRule"/>
</dbReference>
<dbReference type="GO" id="GO:0071555">
    <property type="term" value="P:cell wall organization"/>
    <property type="evidence" value="ECO:0007669"/>
    <property type="project" value="UniProtKB-KW"/>
</dbReference>
<dbReference type="GO" id="GO:0009252">
    <property type="term" value="P:peptidoglycan biosynthetic process"/>
    <property type="evidence" value="ECO:0007669"/>
    <property type="project" value="UniProtKB-UniRule"/>
</dbReference>
<dbReference type="GO" id="GO:0008360">
    <property type="term" value="P:regulation of cell shape"/>
    <property type="evidence" value="ECO:0007669"/>
    <property type="project" value="UniProtKB-KW"/>
</dbReference>
<dbReference type="Gene3D" id="1.10.3810.10">
    <property type="entry name" value="Biosynthetic peptidoglycan transglycosylase-like"/>
    <property type="match status" value="1"/>
</dbReference>
<dbReference type="HAMAP" id="MF_00766">
    <property type="entry name" value="PGT_MtgA"/>
    <property type="match status" value="1"/>
</dbReference>
<dbReference type="InterPro" id="IPR001264">
    <property type="entry name" value="Glyco_trans_51"/>
</dbReference>
<dbReference type="InterPro" id="IPR023346">
    <property type="entry name" value="Lysozyme-like_dom_sf"/>
</dbReference>
<dbReference type="InterPro" id="IPR036950">
    <property type="entry name" value="PBP_transglycosylase"/>
</dbReference>
<dbReference type="InterPro" id="IPR011812">
    <property type="entry name" value="Pep_trsgly"/>
</dbReference>
<dbReference type="NCBIfam" id="TIGR02070">
    <property type="entry name" value="mono_pep_trsgly"/>
    <property type="match status" value="1"/>
</dbReference>
<dbReference type="PANTHER" id="PTHR30400:SF0">
    <property type="entry name" value="BIOSYNTHETIC PEPTIDOGLYCAN TRANSGLYCOSYLASE"/>
    <property type="match status" value="1"/>
</dbReference>
<dbReference type="PANTHER" id="PTHR30400">
    <property type="entry name" value="MONOFUNCTIONAL BIOSYNTHETIC PEPTIDOGLYCAN TRANSGLYCOSYLASE"/>
    <property type="match status" value="1"/>
</dbReference>
<dbReference type="Pfam" id="PF00912">
    <property type="entry name" value="Transgly"/>
    <property type="match status" value="1"/>
</dbReference>
<dbReference type="SUPFAM" id="SSF53955">
    <property type="entry name" value="Lysozyme-like"/>
    <property type="match status" value="1"/>
</dbReference>
<protein>
    <recommendedName>
        <fullName evidence="1">Biosynthetic peptidoglycan transglycosylase</fullName>
        <ecNumber evidence="1">2.4.99.28</ecNumber>
    </recommendedName>
    <alternativeName>
        <fullName evidence="1">Glycan polymerase</fullName>
    </alternativeName>
    <alternativeName>
        <fullName evidence="1">Peptidoglycan glycosyltransferase MtgA</fullName>
        <shortName evidence="1">PGT</shortName>
    </alternativeName>
</protein>